<protein>
    <recommendedName>
        <fullName evidence="6">Cytochrome-c peroxidase IdrP2</fullName>
        <ecNumber evidence="7">1.11.1.5</ecNumber>
    </recommendedName>
    <alternativeName>
        <fullName evidence="6">Iodate reductase subunit IdrP2</fullName>
    </alternativeName>
</protein>
<gene>
    <name evidence="5" type="primary">idrP2</name>
    <name evidence="8" type="ORF">PSCT_04482</name>
</gene>
<feature type="signal peptide" evidence="2">
    <location>
        <begin position="1"/>
        <end position="27"/>
    </location>
</feature>
<feature type="chain" id="PRO_5017308201" description="Cytochrome-c peroxidase IdrP2" evidence="2">
    <location>
        <begin position="28"/>
        <end position="368"/>
    </location>
</feature>
<feature type="domain" description="Cytochrome c 1" evidence="3">
    <location>
        <begin position="48"/>
        <end position="158"/>
    </location>
</feature>
<feature type="domain" description="Cytochrome c 2" evidence="3">
    <location>
        <begin position="201"/>
        <end position="346"/>
    </location>
</feature>
<feature type="binding site" description="covalent" evidence="3">
    <location>
        <position position="70"/>
    </location>
    <ligand>
        <name>heme c</name>
        <dbReference type="ChEBI" id="CHEBI:61717"/>
        <label>1</label>
    </ligand>
</feature>
<feature type="binding site" description="covalent" evidence="3">
    <location>
        <position position="73"/>
    </location>
    <ligand>
        <name>heme c</name>
        <dbReference type="ChEBI" id="CHEBI:61717"/>
        <label>1</label>
    </ligand>
</feature>
<feature type="binding site" description="axial binding residue" evidence="3">
    <location>
        <position position="74"/>
    </location>
    <ligand>
        <name>heme c</name>
        <dbReference type="ChEBI" id="CHEBI:61717"/>
        <label>1</label>
    </ligand>
    <ligandPart>
        <name>Fe</name>
        <dbReference type="ChEBI" id="CHEBI:18248"/>
    </ligandPart>
</feature>
<feature type="binding site" description="covalent" evidence="3">
    <location>
        <position position="216"/>
    </location>
    <ligand>
        <name>heme c</name>
        <dbReference type="ChEBI" id="CHEBI:61717"/>
        <label>2</label>
    </ligand>
</feature>
<feature type="binding site" description="covalent" evidence="3">
    <location>
        <position position="219"/>
    </location>
    <ligand>
        <name>heme c</name>
        <dbReference type="ChEBI" id="CHEBI:61717"/>
        <label>2</label>
    </ligand>
</feature>
<feature type="binding site" description="axial binding residue" evidence="3">
    <location>
        <position position="220"/>
    </location>
    <ligand>
        <name>heme c</name>
        <dbReference type="ChEBI" id="CHEBI:61717"/>
        <label>2</label>
    </ligand>
    <ligandPart>
        <name>Fe</name>
        <dbReference type="ChEBI" id="CHEBI:18248"/>
    </ligandPart>
</feature>
<reference key="1">
    <citation type="submission" date="2016-11" db="EMBL/GenBank/DDBJ databases">
        <title>Genome sequencing of bacteria contributing to the geochemical cycling of arsenic, bromine, and iodine.</title>
        <authorList>
            <person name="Harada M."/>
            <person name="Ito K."/>
            <person name="Nakajima N."/>
            <person name="Yamamura S."/>
            <person name="Tomita M."/>
            <person name="Suzuki H."/>
            <person name="Amachi S."/>
        </authorList>
    </citation>
    <scope>NUCLEOTIDE SEQUENCE [LARGE SCALE GENOMIC DNA]</scope>
    <source>
        <strain>SCT</strain>
    </source>
</reference>
<reference key="2">
    <citation type="journal article" date="2020" name="Environ. Microbiol.">
        <title>A novel dimethylsulfoxide reductase family of molybdenum enzyme, Idr, is involved in iodate respiration by Pseudomonas sp. SCT.</title>
        <authorList>
            <person name="Yamazaki C."/>
            <person name="Kashiwa S."/>
            <person name="Horiuchi A."/>
            <person name="Kasahara Y."/>
            <person name="Yamamura S."/>
            <person name="Amachi S."/>
        </authorList>
    </citation>
    <scope>IDENTIFICATION BY MASS SPECTROMETRY</scope>
    <scope>FUNCTION</scope>
    <scope>SUBUNIT</scope>
    <scope>SUBCELLULAR LOCATION</scope>
    <scope>INDUCTION</scope>
    <source>
        <strain>SCT</strain>
    </source>
</reference>
<accession>A0A391NKV7</accession>
<comment type="function">
    <text evidence="4">Involved in iodate respiration (PubMed:32190953). Probably reduces the H(2)O(2) produced by IdrA/IdrB to H(2)O, using a reduced cytochrome c as the electron donor (PubMed:32190953).</text>
</comment>
<comment type="catalytic activity">
    <reaction evidence="7">
        <text>2 Fe(II)-[cytochrome c] + H2O2 + 2 H(+) = 2 Fe(III)-[cytochrome c] + 2 H2O</text>
        <dbReference type="Rhea" id="RHEA:16581"/>
        <dbReference type="Rhea" id="RHEA-COMP:10350"/>
        <dbReference type="Rhea" id="RHEA-COMP:14399"/>
        <dbReference type="ChEBI" id="CHEBI:15377"/>
        <dbReference type="ChEBI" id="CHEBI:15378"/>
        <dbReference type="ChEBI" id="CHEBI:16240"/>
        <dbReference type="ChEBI" id="CHEBI:29033"/>
        <dbReference type="ChEBI" id="CHEBI:29034"/>
        <dbReference type="EC" id="1.11.1.5"/>
    </reaction>
</comment>
<comment type="cofactor">
    <cofactor evidence="1">
        <name>heme c</name>
        <dbReference type="ChEBI" id="CHEBI:61717"/>
    </cofactor>
    <text evidence="1">Binds 2 heme c groups.</text>
</comment>
<comment type="subunit">
    <text evidence="4">The iodate reductase (Idr) complex is composed of a molybdopterin-dependent iodate reductase (IdrA and IdrB subunits) and two associated peroxidases (IdrP1 and IdrP2).</text>
</comment>
<comment type="subcellular location">
    <subcellularLocation>
        <location evidence="4">Periplasm</location>
    </subcellularLocation>
</comment>
<comment type="induction">
    <text evidence="4">Specifically expressed under iodate-respiring conditions.</text>
</comment>
<keyword id="KW-0349">Heme</keyword>
<keyword id="KW-0408">Iron</keyword>
<keyword id="KW-0479">Metal-binding</keyword>
<keyword id="KW-0560">Oxidoreductase</keyword>
<keyword id="KW-0574">Periplasm</keyword>
<keyword id="KW-0677">Repeat</keyword>
<keyword id="KW-0732">Signal</keyword>
<dbReference type="EC" id="1.11.1.5" evidence="7"/>
<dbReference type="EMBL" id="BDJA01000015">
    <property type="protein sequence ID" value="GCA58262.1"/>
    <property type="molecule type" value="Genomic_DNA"/>
</dbReference>
<dbReference type="SMR" id="A0A391NKV7"/>
<dbReference type="Proteomes" id="UP000268673">
    <property type="component" value="Unassembled WGS sequence"/>
</dbReference>
<dbReference type="GO" id="GO:0042597">
    <property type="term" value="C:periplasmic space"/>
    <property type="evidence" value="ECO:0007669"/>
    <property type="project" value="UniProtKB-SubCell"/>
</dbReference>
<dbReference type="GO" id="GO:0004130">
    <property type="term" value="F:cytochrome-c peroxidase activity"/>
    <property type="evidence" value="ECO:0007669"/>
    <property type="project" value="TreeGrafter"/>
</dbReference>
<dbReference type="GO" id="GO:0009055">
    <property type="term" value="F:electron transfer activity"/>
    <property type="evidence" value="ECO:0007669"/>
    <property type="project" value="InterPro"/>
</dbReference>
<dbReference type="GO" id="GO:0020037">
    <property type="term" value="F:heme binding"/>
    <property type="evidence" value="ECO:0007669"/>
    <property type="project" value="InterPro"/>
</dbReference>
<dbReference type="GO" id="GO:0046872">
    <property type="term" value="F:metal ion binding"/>
    <property type="evidence" value="ECO:0007669"/>
    <property type="project" value="UniProtKB-KW"/>
</dbReference>
<dbReference type="Gene3D" id="1.10.760.10">
    <property type="entry name" value="Cytochrome c-like domain"/>
    <property type="match status" value="2"/>
</dbReference>
<dbReference type="InterPro" id="IPR009056">
    <property type="entry name" value="Cyt_c-like_dom"/>
</dbReference>
<dbReference type="InterPro" id="IPR036909">
    <property type="entry name" value="Cyt_c-like_dom_sf"/>
</dbReference>
<dbReference type="InterPro" id="IPR051395">
    <property type="entry name" value="Cytochrome_c_Peroxidase/MauG"/>
</dbReference>
<dbReference type="InterPro" id="IPR004852">
    <property type="entry name" value="Di-haem_cyt_c_peroxidsae"/>
</dbReference>
<dbReference type="InterPro" id="IPR026259">
    <property type="entry name" value="MauG/Cytc_peroxidase"/>
</dbReference>
<dbReference type="PANTHER" id="PTHR30600:SF10">
    <property type="entry name" value="BLL6722 PROTEIN"/>
    <property type="match status" value="1"/>
</dbReference>
<dbReference type="PANTHER" id="PTHR30600">
    <property type="entry name" value="CYTOCHROME C PEROXIDASE-RELATED"/>
    <property type="match status" value="1"/>
</dbReference>
<dbReference type="Pfam" id="PF03150">
    <property type="entry name" value="CCP_MauG"/>
    <property type="match status" value="1"/>
</dbReference>
<dbReference type="PIRSF" id="PIRSF000294">
    <property type="entry name" value="Cytochrome-c_peroxidase"/>
    <property type="match status" value="1"/>
</dbReference>
<dbReference type="SUPFAM" id="SSF46626">
    <property type="entry name" value="Cytochrome c"/>
    <property type="match status" value="2"/>
</dbReference>
<dbReference type="PROSITE" id="PS51007">
    <property type="entry name" value="CYTC"/>
    <property type="match status" value="2"/>
</dbReference>
<evidence type="ECO:0000250" key="1">
    <source>
        <dbReference type="UniProtKB" id="P14532"/>
    </source>
</evidence>
<evidence type="ECO:0000255" key="2"/>
<evidence type="ECO:0000255" key="3">
    <source>
        <dbReference type="PROSITE-ProRule" id="PRU00433"/>
    </source>
</evidence>
<evidence type="ECO:0000269" key="4">
    <source>
    </source>
</evidence>
<evidence type="ECO:0000303" key="5">
    <source>
    </source>
</evidence>
<evidence type="ECO:0000305" key="6"/>
<evidence type="ECO:0000305" key="7">
    <source>
    </source>
</evidence>
<evidence type="ECO:0000312" key="8">
    <source>
        <dbReference type="EMBL" id="GCA58262.1"/>
    </source>
</evidence>
<organism>
    <name type="scientific">Pseudomonas sp. (strain SCT)</name>
    <dbReference type="NCBI Taxonomy" id="412955"/>
    <lineage>
        <taxon>Bacteria</taxon>
        <taxon>Pseudomonadati</taxon>
        <taxon>Pseudomonadota</taxon>
        <taxon>Gammaproteobacteria</taxon>
        <taxon>Pseudomonadales</taxon>
        <taxon>Pseudomonadaceae</taxon>
        <taxon>Pseudomonas</taxon>
    </lineage>
</organism>
<name>IDRP2_PSEXS</name>
<sequence>MKWHRGRLTQTLGAMGLTATLTVAAQAAGQGDMLDLAPMPPAKAGNPAMIELGKQFFFDRRLSGDWGVSCASCHDPAKGWGDGLALSKGYPSMEYFRNSPTVLNAAHRKRFLWDGRLDGADPGTLARDMITEAHTMNMDGRLMQERLQQVPEYAALWQKWRNDDINGMRVFNAVGEFITSLETRNAPFDDFAKGDSTAITKEAQHGYALFKGKAGCVSCHNGPIGSDGKLHKTGVPEHPDVLNNPLRTITMLRHYATSGMPNYMSARSDVGAYAISKDERDVGKFQTAQLRDLKYTAPYMHNGVFDTLEEVVAFYNQGGGEGSALSPLTLSTAEQQALVAFLLTLSGDPLIVEDPGQPDMQPRVFGKN</sequence>
<proteinExistence type="evidence at protein level"/>